<evidence type="ECO:0000255" key="1">
    <source>
        <dbReference type="HAMAP-Rule" id="MF_00139"/>
    </source>
</evidence>
<evidence type="ECO:0000255" key="2">
    <source>
        <dbReference type="PROSITE-ProRule" id="PRU01202"/>
    </source>
</evidence>
<evidence type="ECO:0000305" key="3"/>
<accession>P57828</accession>
<dbReference type="EC" id="2.1.2.3" evidence="1"/>
<dbReference type="EC" id="3.5.4.10" evidence="1"/>
<dbReference type="EMBL" id="AE004439">
    <property type="protein sequence ID" value="AAK02306.1"/>
    <property type="molecule type" value="Genomic_DNA"/>
</dbReference>
<dbReference type="RefSeq" id="WP_005756045.1">
    <property type="nucleotide sequence ID" value="NC_002663.1"/>
</dbReference>
<dbReference type="SMR" id="P57828"/>
<dbReference type="STRING" id="272843.PM0222"/>
<dbReference type="EnsemblBacteria" id="AAK02306">
    <property type="protein sequence ID" value="AAK02306"/>
    <property type="gene ID" value="PM0222"/>
</dbReference>
<dbReference type="GeneID" id="77207572"/>
<dbReference type="KEGG" id="pmu:PM0222"/>
<dbReference type="PATRIC" id="fig|272843.6.peg.230"/>
<dbReference type="HOGENOM" id="CLU_016316_5_2_6"/>
<dbReference type="OrthoDB" id="9802065at2"/>
<dbReference type="UniPathway" id="UPA00074">
    <property type="reaction ID" value="UER00133"/>
</dbReference>
<dbReference type="UniPathway" id="UPA00074">
    <property type="reaction ID" value="UER00135"/>
</dbReference>
<dbReference type="Proteomes" id="UP000000809">
    <property type="component" value="Chromosome"/>
</dbReference>
<dbReference type="GO" id="GO:0005829">
    <property type="term" value="C:cytosol"/>
    <property type="evidence" value="ECO:0007669"/>
    <property type="project" value="TreeGrafter"/>
</dbReference>
<dbReference type="GO" id="GO:0003937">
    <property type="term" value="F:IMP cyclohydrolase activity"/>
    <property type="evidence" value="ECO:0007669"/>
    <property type="project" value="UniProtKB-UniRule"/>
</dbReference>
<dbReference type="GO" id="GO:0004643">
    <property type="term" value="F:phosphoribosylaminoimidazolecarboxamide formyltransferase activity"/>
    <property type="evidence" value="ECO:0007669"/>
    <property type="project" value="UniProtKB-UniRule"/>
</dbReference>
<dbReference type="GO" id="GO:0006189">
    <property type="term" value="P:'de novo' IMP biosynthetic process"/>
    <property type="evidence" value="ECO:0007669"/>
    <property type="project" value="UniProtKB-UniRule"/>
</dbReference>
<dbReference type="CDD" id="cd01421">
    <property type="entry name" value="IMPCH"/>
    <property type="match status" value="1"/>
</dbReference>
<dbReference type="FunFam" id="3.40.140.20:FF:000001">
    <property type="entry name" value="Bifunctional purine biosynthesis protein PurH"/>
    <property type="match status" value="1"/>
</dbReference>
<dbReference type="FunFam" id="3.40.140.20:FF:000002">
    <property type="entry name" value="Bifunctional purine biosynthesis protein PurH"/>
    <property type="match status" value="1"/>
</dbReference>
<dbReference type="FunFam" id="3.40.50.1380:FF:000001">
    <property type="entry name" value="Bifunctional purine biosynthesis protein PurH"/>
    <property type="match status" value="1"/>
</dbReference>
<dbReference type="Gene3D" id="3.40.140.20">
    <property type="match status" value="2"/>
</dbReference>
<dbReference type="Gene3D" id="3.40.50.1380">
    <property type="entry name" value="Methylglyoxal synthase-like domain"/>
    <property type="match status" value="1"/>
</dbReference>
<dbReference type="HAMAP" id="MF_00139">
    <property type="entry name" value="PurH"/>
    <property type="match status" value="1"/>
</dbReference>
<dbReference type="InterPro" id="IPR024051">
    <property type="entry name" value="AICAR_Tfase_dup_dom_sf"/>
</dbReference>
<dbReference type="InterPro" id="IPR016193">
    <property type="entry name" value="Cytidine_deaminase-like"/>
</dbReference>
<dbReference type="InterPro" id="IPR011607">
    <property type="entry name" value="MGS-like_dom"/>
</dbReference>
<dbReference type="InterPro" id="IPR036914">
    <property type="entry name" value="MGS-like_dom_sf"/>
</dbReference>
<dbReference type="InterPro" id="IPR002695">
    <property type="entry name" value="PurH-like"/>
</dbReference>
<dbReference type="NCBIfam" id="NF002049">
    <property type="entry name" value="PRK00881.1"/>
    <property type="match status" value="1"/>
</dbReference>
<dbReference type="NCBIfam" id="TIGR00355">
    <property type="entry name" value="purH"/>
    <property type="match status" value="1"/>
</dbReference>
<dbReference type="PANTHER" id="PTHR11692:SF0">
    <property type="entry name" value="BIFUNCTIONAL PURINE BIOSYNTHESIS PROTEIN ATIC"/>
    <property type="match status" value="1"/>
</dbReference>
<dbReference type="PANTHER" id="PTHR11692">
    <property type="entry name" value="BIFUNCTIONAL PURINE BIOSYNTHESIS PROTEIN PURH"/>
    <property type="match status" value="1"/>
</dbReference>
<dbReference type="Pfam" id="PF01808">
    <property type="entry name" value="AICARFT_IMPCHas"/>
    <property type="match status" value="1"/>
</dbReference>
<dbReference type="Pfam" id="PF02142">
    <property type="entry name" value="MGS"/>
    <property type="match status" value="1"/>
</dbReference>
<dbReference type="PIRSF" id="PIRSF000414">
    <property type="entry name" value="AICARFT_IMPCHas"/>
    <property type="match status" value="1"/>
</dbReference>
<dbReference type="SMART" id="SM00798">
    <property type="entry name" value="AICARFT_IMPCHas"/>
    <property type="match status" value="1"/>
</dbReference>
<dbReference type="SMART" id="SM00851">
    <property type="entry name" value="MGS"/>
    <property type="match status" value="1"/>
</dbReference>
<dbReference type="SUPFAM" id="SSF53927">
    <property type="entry name" value="Cytidine deaminase-like"/>
    <property type="match status" value="1"/>
</dbReference>
<dbReference type="SUPFAM" id="SSF52335">
    <property type="entry name" value="Methylglyoxal synthase-like"/>
    <property type="match status" value="1"/>
</dbReference>
<dbReference type="PROSITE" id="PS51855">
    <property type="entry name" value="MGS"/>
    <property type="match status" value="1"/>
</dbReference>
<name>PUR9_PASMU</name>
<gene>
    <name evidence="1" type="primary">purH</name>
    <name type="ordered locus">PM0222</name>
</gene>
<keyword id="KW-0378">Hydrolase</keyword>
<keyword id="KW-0511">Multifunctional enzyme</keyword>
<keyword id="KW-0658">Purine biosynthesis</keyword>
<keyword id="KW-1185">Reference proteome</keyword>
<keyword id="KW-0808">Transferase</keyword>
<reference key="1">
    <citation type="journal article" date="2001" name="Proc. Natl. Acad. Sci. U.S.A.">
        <title>Complete genomic sequence of Pasteurella multocida Pm70.</title>
        <authorList>
            <person name="May B.J."/>
            <person name="Zhang Q."/>
            <person name="Li L.L."/>
            <person name="Paustian M.L."/>
            <person name="Whittam T.S."/>
            <person name="Kapur V."/>
        </authorList>
    </citation>
    <scope>NUCLEOTIDE SEQUENCE [LARGE SCALE GENOMIC DNA]</scope>
    <source>
        <strain>Pm70</strain>
    </source>
</reference>
<protein>
    <recommendedName>
        <fullName evidence="1">Bifunctional purine biosynthesis protein PurH</fullName>
    </recommendedName>
    <domain>
        <recommendedName>
            <fullName evidence="1">Phosphoribosylaminoimidazolecarboxamide formyltransferase</fullName>
            <ecNumber evidence="1">2.1.2.3</ecNumber>
        </recommendedName>
        <alternativeName>
            <fullName evidence="1">AICAR transformylase</fullName>
        </alternativeName>
    </domain>
    <domain>
        <recommendedName>
            <fullName evidence="1">IMP cyclohydrolase</fullName>
            <ecNumber evidence="1">3.5.4.10</ecNumber>
        </recommendedName>
        <alternativeName>
            <fullName evidence="1">ATIC</fullName>
        </alternativeName>
        <alternativeName>
            <fullName evidence="1">IMP synthase</fullName>
        </alternativeName>
        <alternativeName>
            <fullName evidence="1">Inosinicase</fullName>
        </alternativeName>
    </domain>
</protein>
<proteinExistence type="inferred from homology"/>
<sequence length="533" mass="58084">MQPNRPIRQALLSVSDKTGIVEFAQALVQRGVKLLSTGGTAKLLADHGLAVTEVSDYTGFPEMMDGRVKTLHPKVHGGILGRRGTDDEVMSQQGIEGIDMVVVNLYPFAATVAKPNCSLEEAVENIDIGGPTMVRSAAKNHQDVAIVVNNSDFNAILAEMDQHQNSLTLETRFDLAIKAFEHTAQYDAMIANYFGQLVKPYFVAEEEDAEAKCGQFPRTLNLNFIRKQTMRYGENGHQKAAFYVEQDVKEASVSTAKQLQGKALSYNNIADTDAALECVKSFDEPACVIVKHANPCGVALGADILAAYNRAYQTDPTSAFGGIIAFNRELDAKTAQTIIDRQFVEVIIAPTVAEEAKALLKAKKNVRVLECGEWSGTQQRLDVKRVNGGLLVQEADLGMVDLADLKVVSKRQPTEQELKDLLFCWKVAKFVKSNAIVYAKDNQTIGIGAGQMSRVYSAKIAGIKAQDEGLDVAGCVMASDAFFPFRDGIDAAAKVGIQCVIHPGGSMRDQEVIDAADEHNMVMVLTGMRHFRH</sequence>
<feature type="chain" id="PRO_0000192111" description="Bifunctional purine biosynthesis protein PurH">
    <location>
        <begin position="1"/>
        <end position="533"/>
    </location>
</feature>
<feature type="domain" description="MGS-like" evidence="2">
    <location>
        <begin position="1"/>
        <end position="148"/>
    </location>
</feature>
<comment type="catalytic activity">
    <reaction evidence="1">
        <text>(6R)-10-formyltetrahydrofolate + 5-amino-1-(5-phospho-beta-D-ribosyl)imidazole-4-carboxamide = 5-formamido-1-(5-phospho-D-ribosyl)imidazole-4-carboxamide + (6S)-5,6,7,8-tetrahydrofolate</text>
        <dbReference type="Rhea" id="RHEA:22192"/>
        <dbReference type="ChEBI" id="CHEBI:57453"/>
        <dbReference type="ChEBI" id="CHEBI:58467"/>
        <dbReference type="ChEBI" id="CHEBI:58475"/>
        <dbReference type="ChEBI" id="CHEBI:195366"/>
        <dbReference type="EC" id="2.1.2.3"/>
    </reaction>
</comment>
<comment type="catalytic activity">
    <reaction evidence="1">
        <text>IMP + H2O = 5-formamido-1-(5-phospho-D-ribosyl)imidazole-4-carboxamide</text>
        <dbReference type="Rhea" id="RHEA:18445"/>
        <dbReference type="ChEBI" id="CHEBI:15377"/>
        <dbReference type="ChEBI" id="CHEBI:58053"/>
        <dbReference type="ChEBI" id="CHEBI:58467"/>
        <dbReference type="EC" id="3.5.4.10"/>
    </reaction>
</comment>
<comment type="pathway">
    <text evidence="1">Purine metabolism; IMP biosynthesis via de novo pathway; 5-formamido-1-(5-phospho-D-ribosyl)imidazole-4-carboxamide from 5-amino-1-(5-phospho-D-ribosyl)imidazole-4-carboxamide (10-formyl THF route): step 1/1.</text>
</comment>
<comment type="pathway">
    <text evidence="1">Purine metabolism; IMP biosynthesis via de novo pathway; IMP from 5-formamido-1-(5-phospho-D-ribosyl)imidazole-4-carboxamide: step 1/1.</text>
</comment>
<comment type="domain">
    <text evidence="1">The IMP cyclohydrolase activity resides in the N-terminal region.</text>
</comment>
<comment type="similarity">
    <text evidence="1 3">Belongs to the PurH family.</text>
</comment>
<organism>
    <name type="scientific">Pasteurella multocida (strain Pm70)</name>
    <dbReference type="NCBI Taxonomy" id="272843"/>
    <lineage>
        <taxon>Bacteria</taxon>
        <taxon>Pseudomonadati</taxon>
        <taxon>Pseudomonadota</taxon>
        <taxon>Gammaproteobacteria</taxon>
        <taxon>Pasteurellales</taxon>
        <taxon>Pasteurellaceae</taxon>
        <taxon>Pasteurella</taxon>
    </lineage>
</organism>